<evidence type="ECO:0000255" key="1">
    <source>
        <dbReference type="HAMAP-Rule" id="MF_00197"/>
    </source>
</evidence>
<proteinExistence type="inferred from homology"/>
<name>DAPF_CLOAB</name>
<organism>
    <name type="scientific">Clostridium acetobutylicum (strain ATCC 824 / DSM 792 / JCM 1419 / IAM 19013 / LMG 5710 / NBRC 13948 / NRRL B-527 / VKM B-1787 / 2291 / W)</name>
    <dbReference type="NCBI Taxonomy" id="272562"/>
    <lineage>
        <taxon>Bacteria</taxon>
        <taxon>Bacillati</taxon>
        <taxon>Bacillota</taxon>
        <taxon>Clostridia</taxon>
        <taxon>Eubacteriales</taxon>
        <taxon>Clostridiaceae</taxon>
        <taxon>Clostridium</taxon>
    </lineage>
</organism>
<accession>Q97FV2</accession>
<protein>
    <recommendedName>
        <fullName evidence="1">Diaminopimelate epimerase</fullName>
        <shortName evidence="1">DAP epimerase</shortName>
        <ecNumber evidence="1">5.1.1.7</ecNumber>
    </recommendedName>
    <alternativeName>
        <fullName evidence="1">PLP-independent amino acid racemase</fullName>
    </alternativeName>
</protein>
<dbReference type="EC" id="5.1.1.7" evidence="1"/>
<dbReference type="EMBL" id="AE001437">
    <property type="protein sequence ID" value="AAK80571.1"/>
    <property type="molecule type" value="Genomic_DNA"/>
</dbReference>
<dbReference type="PIR" id="H97222">
    <property type="entry name" value="H97222"/>
</dbReference>
<dbReference type="RefSeq" id="NP_349231.1">
    <property type="nucleotide sequence ID" value="NC_003030.1"/>
</dbReference>
<dbReference type="RefSeq" id="WP_010965912.1">
    <property type="nucleotide sequence ID" value="NC_003030.1"/>
</dbReference>
<dbReference type="SMR" id="Q97FV2"/>
<dbReference type="STRING" id="272562.CA_C2624"/>
<dbReference type="GeneID" id="44999092"/>
<dbReference type="KEGG" id="cac:CA_C2624"/>
<dbReference type="PATRIC" id="fig|272562.8.peg.2813"/>
<dbReference type="eggNOG" id="COG0253">
    <property type="taxonomic scope" value="Bacteria"/>
</dbReference>
<dbReference type="HOGENOM" id="CLU_053306_3_1_9"/>
<dbReference type="OrthoDB" id="9805408at2"/>
<dbReference type="UniPathway" id="UPA00034">
    <property type="reaction ID" value="UER00025"/>
</dbReference>
<dbReference type="Proteomes" id="UP000000814">
    <property type="component" value="Chromosome"/>
</dbReference>
<dbReference type="GO" id="GO:0005829">
    <property type="term" value="C:cytosol"/>
    <property type="evidence" value="ECO:0007669"/>
    <property type="project" value="TreeGrafter"/>
</dbReference>
<dbReference type="GO" id="GO:0008837">
    <property type="term" value="F:diaminopimelate epimerase activity"/>
    <property type="evidence" value="ECO:0007669"/>
    <property type="project" value="UniProtKB-UniRule"/>
</dbReference>
<dbReference type="GO" id="GO:0009089">
    <property type="term" value="P:lysine biosynthetic process via diaminopimelate"/>
    <property type="evidence" value="ECO:0007669"/>
    <property type="project" value="UniProtKB-UniRule"/>
</dbReference>
<dbReference type="Gene3D" id="3.10.310.10">
    <property type="entry name" value="Diaminopimelate Epimerase, Chain A, domain 1"/>
    <property type="match status" value="2"/>
</dbReference>
<dbReference type="HAMAP" id="MF_00197">
    <property type="entry name" value="DAP_epimerase"/>
    <property type="match status" value="1"/>
</dbReference>
<dbReference type="InterPro" id="IPR018510">
    <property type="entry name" value="DAP_epimerase_AS"/>
</dbReference>
<dbReference type="InterPro" id="IPR001653">
    <property type="entry name" value="DAP_epimerase_DapF"/>
</dbReference>
<dbReference type="NCBIfam" id="TIGR00652">
    <property type="entry name" value="DapF"/>
    <property type="match status" value="1"/>
</dbReference>
<dbReference type="PANTHER" id="PTHR31689:SF0">
    <property type="entry name" value="DIAMINOPIMELATE EPIMERASE"/>
    <property type="match status" value="1"/>
</dbReference>
<dbReference type="PANTHER" id="PTHR31689">
    <property type="entry name" value="DIAMINOPIMELATE EPIMERASE, CHLOROPLASTIC"/>
    <property type="match status" value="1"/>
</dbReference>
<dbReference type="Pfam" id="PF01678">
    <property type="entry name" value="DAP_epimerase"/>
    <property type="match status" value="2"/>
</dbReference>
<dbReference type="SUPFAM" id="SSF54506">
    <property type="entry name" value="Diaminopimelate epimerase-like"/>
    <property type="match status" value="2"/>
</dbReference>
<dbReference type="PROSITE" id="PS01326">
    <property type="entry name" value="DAP_EPIMERASE"/>
    <property type="match status" value="1"/>
</dbReference>
<sequence>MEINIREDAFIVEINILKCHGTGNDFILIDEYNNNYNLDDETRRDIAIQACNRAKFIGGDGILFVQKSDICDAKMRIFNADGSEAEMCGNGLRCVGRYVIEMLNKESVEIETLKSKYWVKLQEDIYEGVKTVKIDIKSVSLDVKTLPLNYKKEKLIFDKIPELSDEFDFTAVSITNPHLIAIVNNIDSDKLVEIGKKGNSTKSVLPQGVNVSFVKVIDSSNIYVKTYERGVGLTKSCGTAMTASSIVSCIGEKVQFDNAINVYNDGGAIKTIVHKDSNGNYSVDFIGNATFIFEGTMELDKRKIEQFTIDESKFEKETNSYNEFFEYTRKNCK</sequence>
<keyword id="KW-0028">Amino-acid biosynthesis</keyword>
<keyword id="KW-0963">Cytoplasm</keyword>
<keyword id="KW-0413">Isomerase</keyword>
<keyword id="KW-0457">Lysine biosynthesis</keyword>
<keyword id="KW-1185">Reference proteome</keyword>
<reference key="1">
    <citation type="journal article" date="2001" name="J. Bacteriol.">
        <title>Genome sequence and comparative analysis of the solvent-producing bacterium Clostridium acetobutylicum.</title>
        <authorList>
            <person name="Noelling J."/>
            <person name="Breton G."/>
            <person name="Omelchenko M.V."/>
            <person name="Makarova K.S."/>
            <person name="Zeng Q."/>
            <person name="Gibson R."/>
            <person name="Lee H.M."/>
            <person name="Dubois J."/>
            <person name="Qiu D."/>
            <person name="Hitti J."/>
            <person name="Wolf Y.I."/>
            <person name="Tatusov R.L."/>
            <person name="Sabathe F."/>
            <person name="Doucette-Stamm L.A."/>
            <person name="Soucaille P."/>
            <person name="Daly M.J."/>
            <person name="Bennett G.N."/>
            <person name="Koonin E.V."/>
            <person name="Smith D.R."/>
        </authorList>
    </citation>
    <scope>NUCLEOTIDE SEQUENCE [LARGE SCALE GENOMIC DNA]</scope>
    <source>
        <strain>ATCC 824 / DSM 792 / JCM 1419 / IAM 19013 / LMG 5710 / NBRC 13948 / NRRL B-527 / VKM B-1787 / 2291 / W</strain>
    </source>
</reference>
<gene>
    <name evidence="1" type="primary">dapF</name>
    <name type="ordered locus">CA_C2624</name>
</gene>
<feature type="chain" id="PRO_0000149834" description="Diaminopimelate epimerase">
    <location>
        <begin position="1"/>
        <end position="333"/>
    </location>
</feature>
<feature type="active site" description="Proton donor" evidence="1">
    <location>
        <position position="88"/>
    </location>
</feature>
<feature type="active site" description="Proton acceptor" evidence="1">
    <location>
        <position position="237"/>
    </location>
</feature>
<feature type="binding site" evidence="1">
    <location>
        <position position="24"/>
    </location>
    <ligand>
        <name>substrate</name>
    </ligand>
</feature>
<feature type="binding site" evidence="1">
    <location>
        <position position="79"/>
    </location>
    <ligand>
        <name>substrate</name>
    </ligand>
</feature>
<feature type="binding site" evidence="1">
    <location>
        <begin position="89"/>
        <end position="90"/>
    </location>
    <ligand>
        <name>substrate</name>
    </ligand>
</feature>
<feature type="binding site" evidence="1">
    <location>
        <position position="176"/>
    </location>
    <ligand>
        <name>substrate</name>
    </ligand>
</feature>
<feature type="binding site" evidence="1">
    <location>
        <position position="210"/>
    </location>
    <ligand>
        <name>substrate</name>
    </ligand>
</feature>
<feature type="binding site" evidence="1">
    <location>
        <begin position="228"/>
        <end position="229"/>
    </location>
    <ligand>
        <name>substrate</name>
    </ligand>
</feature>
<feature type="binding site" evidence="1">
    <location>
        <begin position="238"/>
        <end position="239"/>
    </location>
    <ligand>
        <name>substrate</name>
    </ligand>
</feature>
<feature type="site" description="Could be important to modulate the pK values of the two catalytic cysteine residues" evidence="1">
    <location>
        <position position="178"/>
    </location>
</feature>
<feature type="site" description="Could be important to modulate the pK values of the two catalytic cysteine residues" evidence="1">
    <location>
        <position position="228"/>
    </location>
</feature>
<comment type="function">
    <text evidence="1">Catalyzes the stereoinversion of LL-2,6-diaminopimelate (L,L-DAP) to meso-diaminopimelate (meso-DAP), a precursor of L-lysine and an essential component of the bacterial peptidoglycan.</text>
</comment>
<comment type="catalytic activity">
    <reaction evidence="1">
        <text>(2S,6S)-2,6-diaminopimelate = meso-2,6-diaminopimelate</text>
        <dbReference type="Rhea" id="RHEA:15393"/>
        <dbReference type="ChEBI" id="CHEBI:57609"/>
        <dbReference type="ChEBI" id="CHEBI:57791"/>
        <dbReference type="EC" id="5.1.1.7"/>
    </reaction>
</comment>
<comment type="pathway">
    <text evidence="1">Amino-acid biosynthesis; L-lysine biosynthesis via DAP pathway; DL-2,6-diaminopimelate from LL-2,6-diaminopimelate: step 1/1.</text>
</comment>
<comment type="subunit">
    <text evidence="1">Homodimer.</text>
</comment>
<comment type="subcellular location">
    <subcellularLocation>
        <location evidence="1">Cytoplasm</location>
    </subcellularLocation>
</comment>
<comment type="similarity">
    <text evidence="1">Belongs to the diaminopimelate epimerase family.</text>
</comment>